<organism>
    <name type="scientific">Drosophila melanogaster</name>
    <name type="common">Fruit fly</name>
    <dbReference type="NCBI Taxonomy" id="7227"/>
    <lineage>
        <taxon>Eukaryota</taxon>
        <taxon>Metazoa</taxon>
        <taxon>Ecdysozoa</taxon>
        <taxon>Arthropoda</taxon>
        <taxon>Hexapoda</taxon>
        <taxon>Insecta</taxon>
        <taxon>Pterygota</taxon>
        <taxon>Neoptera</taxon>
        <taxon>Endopterygota</taxon>
        <taxon>Diptera</taxon>
        <taxon>Brachycera</taxon>
        <taxon>Muscomorpha</taxon>
        <taxon>Ephydroidea</taxon>
        <taxon>Drosophilidae</taxon>
        <taxon>Drosophila</taxon>
        <taxon>Sophophora</taxon>
    </lineage>
</organism>
<keyword id="KW-0067">ATP-binding</keyword>
<keyword id="KW-0158">Chromosome</keyword>
<keyword id="KW-0963">Cytoplasm</keyword>
<keyword id="KW-0238">DNA-binding</keyword>
<keyword id="KW-0413">Isomerase</keyword>
<keyword id="KW-0460">Magnesium</keyword>
<keyword id="KW-0479">Metal-binding</keyword>
<keyword id="KW-0547">Nucleotide-binding</keyword>
<keyword id="KW-0539">Nucleus</keyword>
<keyword id="KW-0597">Phosphoprotein</keyword>
<keyword id="KW-1185">Reference proteome</keyword>
<keyword id="KW-0799">Topoisomerase</keyword>
<protein>
    <recommendedName>
        <fullName evidence="24">DNA topoisomerase 2</fullName>
        <ecNumber evidence="7 8 11 18 19 21 22">5.6.2.2</ecNumber>
    </recommendedName>
    <alternativeName>
        <fullName evidence="24">DNA topoisomerase II</fullName>
    </alternativeName>
</protein>
<proteinExistence type="evidence at protein level"/>
<sequence>MENGNKALSIEQMYQKKSQLEHILLRPDSYIGSVEFTKELMWVYDNSQNRMVQKEISFVPGLYKIFDEILVNAADNKQRDKSMNTIKIDIDPERNMVSVWNNGQGIPVTMHKEQKMYVPTMIFGHLLTSSNYNDDEKKVTGGRNGYGAKLCNIFSTSFTVETATREYKKSFKQTWGNNMGKASDVQIKDFNGTDYTRITFSPDLAKFKMDRLDEDIVALMSRRAYDVAASSKGVSVFLNGNKLGVRNFKDYIDLHIKNTDDDSGPPIKIVHEVANERWEVACCPSDRGFQQVSFVNSIATYKGGRHVDHVVDNLIKQLLEVLKKKNKGGINIKPFQVRNHLWVFVNCLIENPTFDSQTKENMTLQQKGFGSKCTLSEKFINNMSKSGIVESVLAWAKFKAQNDIAKTGGRKSSKIKGIPKLEDANEAGGKNSIKCTLILTEGDSAKSLAVSGLGVIGRDLYGVFPLRGKLLNVREANFKQLSENAEINNLCKIIGLQYKKKYLTEDDLKTLRYGKVMIMTDQDQDGSHIKGLLINFIHTNWPELLRLPFLEEFITPIVKATKKNEELSFYSLPEFEEWKNDTANHHTYNIKYYKGLGTSTSKEAKEYFQDMDRHRILFKYDGSVDDESIVMAFSKKHIESRKVWLTNHMDEVKRRKELGLPERYLYTKGTKSITYADFINLELVLFSNADNERSIPSLVDGLKPGQRKVMFTCFKRNDKREVKVAQLSGSVAEMSAYHHGEVSLQMTIVNLAQNFVGANNINLLEPRGQFGTRLSGGKDCASARYIFTIMSPLTRLIYHPLDDPLLDYQVDDGQKIEPLWYLPIIPMVLVNGAEGIGTGWSTKISNYNPREIMKNLRKMINGQEPSVMHPWYKNFLGRMEYVSDGRYIQTGNIQILSGNRLEISELPVGVWTQNYKENVLEPLSNGTEKVKGIISEYREYHTDTTVRFVISFAPGEFERIHAEEGGFYRVFKLTTTLSTNQMHAFDQNNCLRRFPTAIDILKEYYKLRREYYARRRDFLVGQLTAQADRLSDQARFILEKCEKKLVVENKQRKAMCDELLKRGYRPDPVKEWQRRIKMEDAEQADEEDEEEEEAAPSVSSKAKKEKEVDPEKAFKKLTDVKKFDYLLGMSMWMLTEEKKNELLKQRDTKLSELESLRKKTPEMLWLDDLDALESKLNEVEEKERAEEQGINLKTAKALKGQKSASAKGRKVKSMGGGAGAGDVFPDPDGEPVEFKITEEIIKKMAAAAKVAQAAKEPKKPKEPKEPKVKKEPKGKQIKAEPDASGDEVDEFDAMVEGGSKTSPKAKKAVVKKEPGEKKPRQKKENGGGLKQSKIDFSKAKAKKSDDDVEEVTPRAERPGRRQASKKIDYSSLFSDEEEDGGNVGSDDDGNASDDDSPKRPAKRGREDESSGGAKKKAPPKKRRAVIESDDDDIEIDEDDDDDSDFNC</sequence>
<accession>P15348</accession>
<accession>M9PDQ1</accession>
<accession>Q6NR40</accession>
<accession>Q9VIW2</accession>
<gene>
    <name evidence="23 26" type="primary">Top2</name>
    <name evidence="26" type="ORF">CG10223</name>
</gene>
<dbReference type="EC" id="5.6.2.2" evidence="7 8 11 18 19 21 22"/>
<dbReference type="EMBL" id="AE014134">
    <property type="protein sequence ID" value="AGB93115.1"/>
    <property type="molecule type" value="Genomic_DNA"/>
</dbReference>
<dbReference type="EMBL" id="X61209">
    <property type="protein sequence ID" value="CAA43523.1"/>
    <property type="molecule type" value="Genomic_DNA"/>
</dbReference>
<dbReference type="EMBL" id="AE014134">
    <property type="protein sequence ID" value="AAF53802.2"/>
    <property type="molecule type" value="Genomic_DNA"/>
</dbReference>
<dbReference type="EMBL" id="BT010240">
    <property type="protein sequence ID" value="AAQ23558.1"/>
    <property type="status" value="ALT_FRAME"/>
    <property type="molecule type" value="mRNA"/>
</dbReference>
<dbReference type="EMBL" id="BT150455">
    <property type="protein sequence ID" value="AJP62077.1"/>
    <property type="molecule type" value="mRNA"/>
</dbReference>
<dbReference type="PIR" id="S02160">
    <property type="entry name" value="S02160"/>
</dbReference>
<dbReference type="RefSeq" id="NP_001260580.1">
    <property type="nucleotide sequence ID" value="NM_001273651.1"/>
</dbReference>
<dbReference type="RefSeq" id="NP_476760.1">
    <property type="nucleotide sequence ID" value="NM_057412.5"/>
</dbReference>
<dbReference type="SMR" id="P15348"/>
<dbReference type="BioGRID" id="61203">
    <property type="interactions" value="25"/>
</dbReference>
<dbReference type="FunCoup" id="P15348">
    <property type="interactions" value="1601"/>
</dbReference>
<dbReference type="IntAct" id="P15348">
    <property type="interactions" value="14"/>
</dbReference>
<dbReference type="MINT" id="P15348"/>
<dbReference type="STRING" id="7227.FBpp0304598"/>
<dbReference type="BindingDB" id="P15348"/>
<dbReference type="ChEMBL" id="CHEMBL2671"/>
<dbReference type="iPTMnet" id="P15348"/>
<dbReference type="PaxDb" id="7227-FBpp0304598"/>
<dbReference type="EnsemblMetazoa" id="FBtr0081287">
    <property type="protein sequence ID" value="FBpp0080825"/>
    <property type="gene ID" value="FBgn0284220"/>
</dbReference>
<dbReference type="EnsemblMetazoa" id="FBtr0332320">
    <property type="protein sequence ID" value="FBpp0304598"/>
    <property type="gene ID" value="FBgn0284220"/>
</dbReference>
<dbReference type="GeneID" id="35225"/>
<dbReference type="KEGG" id="dme:Dmel_CG10223"/>
<dbReference type="AGR" id="FB:FBgn0284220"/>
<dbReference type="CTD" id="35225"/>
<dbReference type="FlyBase" id="FBgn0284220">
    <property type="gene designation" value="Top2"/>
</dbReference>
<dbReference type="VEuPathDB" id="VectorBase:FBgn0284220"/>
<dbReference type="eggNOG" id="KOG0355">
    <property type="taxonomic scope" value="Eukaryota"/>
</dbReference>
<dbReference type="GeneTree" id="ENSGT00940000168342"/>
<dbReference type="HOGENOM" id="CLU_001935_1_0_1"/>
<dbReference type="InParanoid" id="P15348"/>
<dbReference type="OMA" id="TWTQDFK"/>
<dbReference type="OrthoDB" id="276498at2759"/>
<dbReference type="PhylomeDB" id="P15348"/>
<dbReference type="Reactome" id="R-DME-4615885">
    <property type="pathway name" value="SUMOylation of DNA replication proteins"/>
</dbReference>
<dbReference type="SABIO-RK" id="P15348"/>
<dbReference type="SignaLink" id="P15348"/>
<dbReference type="ChiTaRS" id="Top2">
    <property type="organism name" value="fly"/>
</dbReference>
<dbReference type="GenomeRNAi" id="35225"/>
<dbReference type="PRO" id="PR:P15348"/>
<dbReference type="Proteomes" id="UP000000803">
    <property type="component" value="Chromosome 2L"/>
</dbReference>
<dbReference type="Bgee" id="FBgn0284220">
    <property type="expression patterns" value="Expressed in eye disc (Drosophila) and 132 other cell types or tissues"/>
</dbReference>
<dbReference type="GO" id="GO:0005694">
    <property type="term" value="C:chromosome"/>
    <property type="evidence" value="ECO:0000314"/>
    <property type="project" value="FlyBase"/>
</dbReference>
<dbReference type="GO" id="GO:0005737">
    <property type="term" value="C:cytoplasm"/>
    <property type="evidence" value="ECO:0007669"/>
    <property type="project" value="UniProtKB-SubCell"/>
</dbReference>
<dbReference type="GO" id="GO:0005634">
    <property type="term" value="C:nucleus"/>
    <property type="evidence" value="ECO:0000314"/>
    <property type="project" value="FlyBase"/>
</dbReference>
<dbReference type="GO" id="GO:0005524">
    <property type="term" value="F:ATP binding"/>
    <property type="evidence" value="ECO:0007669"/>
    <property type="project" value="UniProtKB-KW"/>
</dbReference>
<dbReference type="GO" id="GO:0016887">
    <property type="term" value="F:ATP hydrolysis activity"/>
    <property type="evidence" value="ECO:0000314"/>
    <property type="project" value="FlyBase"/>
</dbReference>
<dbReference type="GO" id="GO:0003682">
    <property type="term" value="F:chromatin binding"/>
    <property type="evidence" value="ECO:0000314"/>
    <property type="project" value="FlyBase"/>
</dbReference>
<dbReference type="GO" id="GO:0003677">
    <property type="term" value="F:DNA binding"/>
    <property type="evidence" value="ECO:0000314"/>
    <property type="project" value="FlyBase"/>
</dbReference>
<dbReference type="GO" id="GO:0003918">
    <property type="term" value="F:DNA topoisomerase type II (double strand cut, ATP-hydrolyzing) activity"/>
    <property type="evidence" value="ECO:0000314"/>
    <property type="project" value="FlyBase"/>
</dbReference>
<dbReference type="GO" id="GO:0000400">
    <property type="term" value="F:four-way junction DNA binding"/>
    <property type="evidence" value="ECO:0000314"/>
    <property type="project" value="FlyBase"/>
</dbReference>
<dbReference type="GO" id="GO:0046872">
    <property type="term" value="F:metal ion binding"/>
    <property type="evidence" value="ECO:0007669"/>
    <property type="project" value="UniProtKB-KW"/>
</dbReference>
<dbReference type="GO" id="GO:0003729">
    <property type="term" value="F:mRNA binding"/>
    <property type="evidence" value="ECO:0000314"/>
    <property type="project" value="FlyBase"/>
</dbReference>
<dbReference type="GO" id="GO:0000182">
    <property type="term" value="F:rDNA binding"/>
    <property type="evidence" value="ECO:0000314"/>
    <property type="project" value="FlyBase"/>
</dbReference>
<dbReference type="GO" id="GO:0003696">
    <property type="term" value="F:satellite DNA binding"/>
    <property type="evidence" value="ECO:0000314"/>
    <property type="project" value="FlyBase"/>
</dbReference>
<dbReference type="GO" id="GO:0030261">
    <property type="term" value="P:chromosome condensation"/>
    <property type="evidence" value="ECO:0000315"/>
    <property type="project" value="FlyBase"/>
</dbReference>
<dbReference type="GO" id="GO:0006265">
    <property type="term" value="P:DNA topological change"/>
    <property type="evidence" value="ECO:0000314"/>
    <property type="project" value="FlyBase"/>
</dbReference>
<dbReference type="GO" id="GO:0031507">
    <property type="term" value="P:heterochromatin formation"/>
    <property type="evidence" value="ECO:0000314"/>
    <property type="project" value="FlyBase"/>
</dbReference>
<dbReference type="GO" id="GO:0007060">
    <property type="term" value="P:male meiosis chromosome segregation"/>
    <property type="evidence" value="ECO:0000315"/>
    <property type="project" value="FlyBase"/>
</dbReference>
<dbReference type="GO" id="GO:0051321">
    <property type="term" value="P:meiotic cell cycle"/>
    <property type="evidence" value="ECO:0000304"/>
    <property type="project" value="FlyBase"/>
</dbReference>
<dbReference type="GO" id="GO:0051310">
    <property type="term" value="P:metaphase chromosome alignment"/>
    <property type="evidence" value="ECO:0000314"/>
    <property type="project" value="FlyBase"/>
</dbReference>
<dbReference type="GO" id="GO:0000278">
    <property type="term" value="P:mitotic cell cycle"/>
    <property type="evidence" value="ECO:0007001"/>
    <property type="project" value="FlyBase"/>
</dbReference>
<dbReference type="GO" id="GO:0007076">
    <property type="term" value="P:mitotic chromosome condensation"/>
    <property type="evidence" value="ECO:0000315"/>
    <property type="project" value="FlyBase"/>
</dbReference>
<dbReference type="GO" id="GO:0000070">
    <property type="term" value="P:mitotic sister chromatid segregation"/>
    <property type="evidence" value="ECO:0000315"/>
    <property type="project" value="FlyBase"/>
</dbReference>
<dbReference type="GO" id="GO:0000712">
    <property type="term" value="P:resolution of meiotic recombination intermediates"/>
    <property type="evidence" value="ECO:0000318"/>
    <property type="project" value="GO_Central"/>
</dbReference>
<dbReference type="GO" id="GO:0000819">
    <property type="term" value="P:sister chromatid segregation"/>
    <property type="evidence" value="ECO:0000314"/>
    <property type="project" value="FlyBase"/>
</dbReference>
<dbReference type="CDD" id="cd16930">
    <property type="entry name" value="HATPase_TopII-like"/>
    <property type="match status" value="1"/>
</dbReference>
<dbReference type="CDD" id="cd00187">
    <property type="entry name" value="TOP4c"/>
    <property type="match status" value="1"/>
</dbReference>
<dbReference type="CDD" id="cd03481">
    <property type="entry name" value="TopoIIA_Trans_ScTopoIIA"/>
    <property type="match status" value="1"/>
</dbReference>
<dbReference type="CDD" id="cd03365">
    <property type="entry name" value="TOPRIM_TopoIIA"/>
    <property type="match status" value="1"/>
</dbReference>
<dbReference type="FunFam" id="1.10.268.10:FF:000013">
    <property type="entry name" value="DNA topoisomerase 2"/>
    <property type="match status" value="1"/>
</dbReference>
<dbReference type="FunFam" id="3.30.1360.40:FF:000003">
    <property type="entry name" value="DNA topoisomerase 2"/>
    <property type="match status" value="1"/>
</dbReference>
<dbReference type="FunFam" id="3.30.1490.30:FF:000001">
    <property type="entry name" value="DNA topoisomerase 2"/>
    <property type="match status" value="1"/>
</dbReference>
<dbReference type="FunFam" id="3.30.230.10:FF:000008">
    <property type="entry name" value="DNA topoisomerase 2"/>
    <property type="match status" value="1"/>
</dbReference>
<dbReference type="FunFam" id="3.30.565.10:FF:000004">
    <property type="entry name" value="DNA topoisomerase 2"/>
    <property type="match status" value="1"/>
</dbReference>
<dbReference type="FunFam" id="3.40.50.670:FF:000001">
    <property type="entry name" value="DNA topoisomerase 2"/>
    <property type="match status" value="2"/>
</dbReference>
<dbReference type="FunFam" id="3.90.199.10:FF:000002">
    <property type="entry name" value="DNA topoisomerase 2"/>
    <property type="match status" value="1"/>
</dbReference>
<dbReference type="Gene3D" id="3.30.1360.40">
    <property type="match status" value="1"/>
</dbReference>
<dbReference type="Gene3D" id="3.30.1490.30">
    <property type="match status" value="1"/>
</dbReference>
<dbReference type="Gene3D" id="3.30.230.10">
    <property type="match status" value="1"/>
</dbReference>
<dbReference type="Gene3D" id="3.40.50.670">
    <property type="match status" value="1"/>
</dbReference>
<dbReference type="Gene3D" id="3.30.565.10">
    <property type="entry name" value="Histidine kinase-like ATPase, C-terminal domain"/>
    <property type="match status" value="1"/>
</dbReference>
<dbReference type="Gene3D" id="3.90.199.10">
    <property type="entry name" value="Topoisomerase II, domain 5"/>
    <property type="match status" value="1"/>
</dbReference>
<dbReference type="Gene3D" id="1.10.268.10">
    <property type="entry name" value="Topoisomerase, domain 3"/>
    <property type="match status" value="1"/>
</dbReference>
<dbReference type="InterPro" id="IPR050634">
    <property type="entry name" value="DNA_Topoisomerase_II"/>
</dbReference>
<dbReference type="InterPro" id="IPR036890">
    <property type="entry name" value="HATPase_C_sf"/>
</dbReference>
<dbReference type="InterPro" id="IPR020568">
    <property type="entry name" value="Ribosomal_Su5_D2-typ_SF"/>
</dbReference>
<dbReference type="InterPro" id="IPR014721">
    <property type="entry name" value="Ribsml_uS5_D2-typ_fold_subgr"/>
</dbReference>
<dbReference type="InterPro" id="IPR001241">
    <property type="entry name" value="Topo_IIA"/>
</dbReference>
<dbReference type="InterPro" id="IPR013760">
    <property type="entry name" value="Topo_IIA-like_dom_sf"/>
</dbReference>
<dbReference type="InterPro" id="IPR013758">
    <property type="entry name" value="Topo_IIA_A/C_ab"/>
</dbReference>
<dbReference type="InterPro" id="IPR013757">
    <property type="entry name" value="Topo_IIA_A_a_sf"/>
</dbReference>
<dbReference type="InterPro" id="IPR013759">
    <property type="entry name" value="Topo_IIA_B_C"/>
</dbReference>
<dbReference type="InterPro" id="IPR013506">
    <property type="entry name" value="Topo_IIA_bsu_dom2"/>
</dbReference>
<dbReference type="InterPro" id="IPR002205">
    <property type="entry name" value="Topo_IIA_dom_A"/>
</dbReference>
<dbReference type="InterPro" id="IPR001154">
    <property type="entry name" value="TopoII_euk"/>
</dbReference>
<dbReference type="InterPro" id="IPR018522">
    <property type="entry name" value="TopoIIA_CS"/>
</dbReference>
<dbReference type="InterPro" id="IPR031660">
    <property type="entry name" value="TOPRIM_C"/>
</dbReference>
<dbReference type="InterPro" id="IPR006171">
    <property type="entry name" value="TOPRIM_dom"/>
</dbReference>
<dbReference type="InterPro" id="IPR034157">
    <property type="entry name" value="TOPRIM_TopoII"/>
</dbReference>
<dbReference type="PANTHER" id="PTHR10169:SF38">
    <property type="entry name" value="DNA TOPOISOMERASE 2"/>
    <property type="match status" value="1"/>
</dbReference>
<dbReference type="PANTHER" id="PTHR10169">
    <property type="entry name" value="DNA TOPOISOMERASE/GYRASE"/>
    <property type="match status" value="1"/>
</dbReference>
<dbReference type="Pfam" id="PF00204">
    <property type="entry name" value="DNA_gyraseB"/>
    <property type="match status" value="1"/>
</dbReference>
<dbReference type="Pfam" id="PF00521">
    <property type="entry name" value="DNA_topoisoIV"/>
    <property type="match status" value="1"/>
</dbReference>
<dbReference type="Pfam" id="PF02518">
    <property type="entry name" value="HATPase_c"/>
    <property type="match status" value="1"/>
</dbReference>
<dbReference type="Pfam" id="PF01751">
    <property type="entry name" value="Toprim"/>
    <property type="match status" value="1"/>
</dbReference>
<dbReference type="Pfam" id="PF16898">
    <property type="entry name" value="TOPRIM_C"/>
    <property type="match status" value="1"/>
</dbReference>
<dbReference type="PRINTS" id="PR01158">
    <property type="entry name" value="TOPISMRASEII"/>
</dbReference>
<dbReference type="PRINTS" id="PR00418">
    <property type="entry name" value="TPI2FAMILY"/>
</dbReference>
<dbReference type="SMART" id="SM00433">
    <property type="entry name" value="TOP2c"/>
    <property type="match status" value="1"/>
</dbReference>
<dbReference type="SMART" id="SM00434">
    <property type="entry name" value="TOP4c"/>
    <property type="match status" value="1"/>
</dbReference>
<dbReference type="SUPFAM" id="SSF55874">
    <property type="entry name" value="ATPase domain of HSP90 chaperone/DNA topoisomerase II/histidine kinase"/>
    <property type="match status" value="1"/>
</dbReference>
<dbReference type="SUPFAM" id="SSF54211">
    <property type="entry name" value="Ribosomal protein S5 domain 2-like"/>
    <property type="match status" value="1"/>
</dbReference>
<dbReference type="SUPFAM" id="SSF56719">
    <property type="entry name" value="Type II DNA topoisomerase"/>
    <property type="match status" value="1"/>
</dbReference>
<dbReference type="PROSITE" id="PS52040">
    <property type="entry name" value="TOPO_IIA"/>
    <property type="match status" value="1"/>
</dbReference>
<dbReference type="PROSITE" id="PS00177">
    <property type="entry name" value="TOPOISOMERASE_II"/>
    <property type="match status" value="1"/>
</dbReference>
<dbReference type="PROSITE" id="PS50880">
    <property type="entry name" value="TOPRIM"/>
    <property type="match status" value="1"/>
</dbReference>
<feature type="chain" id="PRO_0000145374" description="DNA topoisomerase 2">
    <location>
        <begin position="1"/>
        <end position="1447"/>
    </location>
</feature>
<feature type="domain" description="Toprim" evidence="4">
    <location>
        <begin position="435"/>
        <end position="552"/>
    </location>
</feature>
<feature type="domain" description="Topo IIA-type catalytic" evidence="5">
    <location>
        <begin position="695"/>
        <end position="1169"/>
    </location>
</feature>
<feature type="region of interest" description="Interaction with DNA" evidence="3">
    <location>
        <begin position="323"/>
        <end position="325"/>
    </location>
</feature>
<feature type="region of interest" description="Interaction with DNA" evidence="3">
    <location>
        <begin position="972"/>
        <end position="981"/>
    </location>
</feature>
<feature type="region of interest" description="Disordered" evidence="6">
    <location>
        <begin position="1079"/>
        <end position="1110"/>
    </location>
</feature>
<feature type="region of interest" description="Disordered" evidence="6">
    <location>
        <begin position="1183"/>
        <end position="1231"/>
    </location>
</feature>
<feature type="region of interest" description="Disordered" evidence="6">
    <location>
        <begin position="1246"/>
        <end position="1447"/>
    </location>
</feature>
<feature type="compositionally biased region" description="Acidic residues" evidence="6">
    <location>
        <begin position="1081"/>
        <end position="1094"/>
    </location>
</feature>
<feature type="compositionally biased region" description="Basic and acidic residues" evidence="6">
    <location>
        <begin position="1255"/>
        <end position="1281"/>
    </location>
</feature>
<feature type="compositionally biased region" description="Acidic residues" evidence="6">
    <location>
        <begin position="1283"/>
        <end position="1293"/>
    </location>
</feature>
<feature type="compositionally biased region" description="Basic and acidic residues" evidence="6">
    <location>
        <begin position="1310"/>
        <end position="1325"/>
    </location>
</feature>
<feature type="compositionally biased region" description="Basic and acidic residues" evidence="6">
    <location>
        <begin position="1332"/>
        <end position="1359"/>
    </location>
</feature>
<feature type="compositionally biased region" description="Acidic residues" evidence="6">
    <location>
        <begin position="1374"/>
        <end position="1394"/>
    </location>
</feature>
<feature type="compositionally biased region" description="Basic and acidic residues" evidence="6">
    <location>
        <begin position="1395"/>
        <end position="1408"/>
    </location>
</feature>
<feature type="compositionally biased region" description="Basic residues" evidence="6">
    <location>
        <begin position="1413"/>
        <end position="1423"/>
    </location>
</feature>
<feature type="compositionally biased region" description="Acidic residues" evidence="6">
    <location>
        <begin position="1427"/>
        <end position="1447"/>
    </location>
</feature>
<feature type="active site" description="O-(5'-phospho-DNA)-tyrosine intermediate" evidence="5">
    <location>
        <position position="785"/>
    </location>
</feature>
<feature type="binding site" evidence="3">
    <location>
        <position position="72"/>
    </location>
    <ligand>
        <name>ATP</name>
        <dbReference type="ChEBI" id="CHEBI:30616"/>
    </ligand>
</feature>
<feature type="binding site" evidence="3">
    <location>
        <position position="101"/>
    </location>
    <ligand>
        <name>ATP</name>
        <dbReference type="ChEBI" id="CHEBI:30616"/>
    </ligand>
</feature>
<feature type="binding site" evidence="3">
    <location>
        <begin position="129"/>
        <end position="131"/>
    </location>
    <ligand>
        <name>ATP</name>
        <dbReference type="ChEBI" id="CHEBI:30616"/>
    </ligand>
</feature>
<feature type="binding site" evidence="3">
    <location>
        <begin position="142"/>
        <end position="149"/>
    </location>
    <ligand>
        <name>ATP</name>
        <dbReference type="ChEBI" id="CHEBI:30616"/>
    </ligand>
</feature>
<feature type="binding site" evidence="3">
    <location>
        <begin position="357"/>
        <end position="359"/>
    </location>
    <ligand>
        <name>ATP</name>
        <dbReference type="ChEBI" id="CHEBI:30616"/>
    </ligand>
</feature>
<feature type="binding site" evidence="4">
    <location>
        <position position="441"/>
    </location>
    <ligand>
        <name>Mg(2+)</name>
        <dbReference type="ChEBI" id="CHEBI:18420"/>
        <label>1</label>
        <note>catalytic</note>
    </ligand>
</feature>
<feature type="binding site" evidence="4">
    <location>
        <position position="521"/>
    </location>
    <ligand>
        <name>Mg(2+)</name>
        <dbReference type="ChEBI" id="CHEBI:18420"/>
        <label>1</label>
        <note>catalytic</note>
    </ligand>
</feature>
<feature type="binding site" evidence="4">
    <location>
        <position position="521"/>
    </location>
    <ligand>
        <name>Mg(2+)</name>
        <dbReference type="ChEBI" id="CHEBI:18420"/>
        <label>2</label>
    </ligand>
</feature>
<feature type="binding site" evidence="4">
    <location>
        <position position="523"/>
    </location>
    <ligand>
        <name>Mg(2+)</name>
        <dbReference type="ChEBI" id="CHEBI:18420"/>
        <label>2</label>
    </ligand>
</feature>
<feature type="site" description="Interaction with DNA" evidence="4">
    <location>
        <position position="469"/>
    </location>
</feature>
<feature type="site" description="Interaction with DNA" evidence="4">
    <location>
        <position position="472"/>
    </location>
</feature>
<feature type="site" description="Interaction with DNA" evidence="4">
    <location>
        <position position="641"/>
    </location>
</feature>
<feature type="site" description="Interaction with DNA" evidence="4">
    <location>
        <position position="642"/>
    </location>
</feature>
<feature type="site" description="Interaction with DNA" evidence="4">
    <location>
        <position position="703"/>
    </location>
</feature>
<feature type="site" description="Interaction with DNA" evidence="4">
    <location>
        <position position="737"/>
    </location>
</feature>
<feature type="site" description="Interaction with DNA" evidence="4">
    <location>
        <position position="743"/>
    </location>
</feature>
<feature type="site" description="Transition state stabilizer" evidence="1">
    <location>
        <position position="784"/>
    </location>
</feature>
<feature type="site" description="Important for DNA bending; intercalates between base pairs of target DNA" evidence="1">
    <location>
        <position position="836"/>
    </location>
</feature>
<feature type="site" description="Interaction with DNA" evidence="3">
    <location>
        <position position="911"/>
    </location>
</feature>
<feature type="modified residue" description="Phosphoserine" evidence="13">
    <location>
        <position position="1284"/>
    </location>
</feature>
<feature type="modified residue" description="Phosphoserine" evidence="13">
    <location>
        <position position="1344"/>
    </location>
</feature>
<feature type="modified residue" description="Phosphothreonine" evidence="13">
    <location>
        <position position="1352"/>
    </location>
</feature>
<feature type="modified residue" description="Phosphoserine" evidence="13">
    <location>
        <position position="1374"/>
    </location>
</feature>
<feature type="modified residue" description="Phosphoserine" evidence="13">
    <location>
        <position position="1385"/>
    </location>
</feature>
<feature type="modified residue" description="Phosphoserine" evidence="13">
    <location>
        <position position="1392"/>
    </location>
</feature>
<feature type="modified residue" description="Phosphoserine" evidence="13">
    <location>
        <position position="1396"/>
    </location>
</feature>
<feature type="mutagenesis site" description="No effect on double-stranded DNA cleavage. Strong decrease in ATPase activity and strand passage activity." evidence="22">
    <original>K</original>
    <variation>Q</variation>
    <variation>E</variation>
    <location>
        <position position="359"/>
    </location>
</feature>
<feature type="mutagenesis site" description="No effect on enzyme activity." evidence="22">
    <original>K</original>
    <variation>R</variation>
    <location>
        <position position="359"/>
    </location>
</feature>
<comment type="function">
    <text evidence="7 8 11 12 14 15 16 17 18 19 20 21 22">Control of topological states of DNA by transient breakage and subsequent rejoining of DNA strands (PubMed:10786800, PubMed:1328202, PubMed:2547764, PubMed:6308011, PubMed:8383533, PubMed:8978614). Topoisomerase II makes double-strand breaks (PubMed:10786800, PubMed:1328202, PubMed:2547764, PubMed:6308011, PubMed:8383533, PubMed:9545289). Essential during mitosis and meiosis for proper segregation of daughter chromosomes (PubMed:10751154, PubMed:14600258, PubMed:18752348, PubMed:25340780). During meiosis, it disrupts heterochromatic connections between achiasmate and chiasmate homologs after spindle assembly so that chromosomes can separate at prometaphase I (PubMed:25340780). During mitosis, it functions in the separation of sister chromatids by establishing amphitelic kinetochore attachments in mitotic spindles (PubMed:18752348). May have a role in chromatin condensation and chromosome structure (PubMed:14600258, PubMed:18752348, PubMed:25340780). May be involved in X-chromosome dosage compensation, perhaps by modifying the topological state of compensated genes (PubMed:23989663). Regulates activity of the gypsy chromatin insulator complex by binding to mod(mdg4) and preventing its degradation (PubMed:21304601).</text>
</comment>
<comment type="catalytic activity">
    <reaction evidence="7 8 11 18 19 21 22">
        <text>ATP-dependent breakage, passage and rejoining of double-stranded DNA.</text>
        <dbReference type="EC" id="5.6.2.2"/>
    </reaction>
</comment>
<comment type="cofactor">
    <cofactor evidence="11 18 19 20">
        <name>Mg(2+)</name>
        <dbReference type="ChEBI" id="CHEBI:18420"/>
    </cofactor>
    <cofactor evidence="4">
        <name>Mn(2+)</name>
        <dbReference type="ChEBI" id="CHEBI:29035"/>
    </cofactor>
    <cofactor evidence="11 20">
        <name>Ca(2+)</name>
        <dbReference type="ChEBI" id="CHEBI:29108"/>
    </cofactor>
    <text evidence="4">Binds two Mg(2+) per subunit. The magnesium ions form salt bridges with both the protein and the DNA. Can also accept other divalent metal cations, such as Mn(2+) or Ca(2+).</text>
</comment>
<comment type="biophysicochemical properties">
    <kinetics>
        <KM evidence="19">200 uM for negatively supercoiled double-stranded plasmid DNA (at 30 degrees Celsius)</KM>
        <KM evidence="19">140 uM for negatively supercoiled double-stranded viral DNA (at 30 degrees Celsius)</KM>
        <KM evidence="8">270 uM for positively supercoiled double-stranded linear DNA</KM>
        <KM evidence="19">280 uM for ATP (at 30 degrees Celsius)</KM>
        <KM evidence="19">630 uM for dATP (at 30 degrees Celsius)</KM>
    </kinetics>
</comment>
<comment type="subunit">
    <text evidence="2 10 15 16 21">Homodimer (By similarity). Interacts with mod(mdg4) (PubMed:21304601). Interacts with barr (PubMed:11172718, PubMed:8978614). Interacts with ph-p (PubMed:11172718). Interacts with mle; the interaction mediates association with the MSL dosage compensation complex (PubMed:23989663).</text>
</comment>
<comment type="subcellular location">
    <subcellularLocation>
        <location evidence="7 9 10 12">Nucleus</location>
    </subcellularLocation>
    <subcellularLocation>
        <location evidence="12 14 15 21">Chromosome</location>
    </subcellularLocation>
    <subcellularLocation>
        <location evidence="9">Cytoplasm</location>
    </subcellularLocation>
    <text evidence="7 9">Nuclear at interphase, becoming diffusely dispersed in the cytoplasm at later cell cycle stages (PubMed:10751154, PubMed:10885744). However in early developing embryos, some may remain associated with condensed chromosomes at metaphase (PubMed:10885744).</text>
</comment>
<comment type="developmental stage">
    <text evidence="9">Detected in germline and follicle cells (at protein level). Predominantly expressed in follicle cells where expression persists throughout oogenesis (at protein level). In germline cells, expression levels decrease as cells develop and move to the posterior region of the germarium.</text>
</comment>
<comment type="PTM">
    <text evidence="7 11 20">Phosphorylated (PubMed:10751154, PubMed:1328202, PubMed:8383533). Phosphorylation by casein kinase II enhances ATPase activity (PubMed:1328202).</text>
</comment>
<comment type="disruption phenotype">
    <text evidence="15 17">Homozygous lethal (PubMed:21304601). Embryogenesis appears normal, probably due to maternal contribution of the protein (PubMed:21304601). However after hatching flies show a 2-3 day delay in development and most die before the third instar stage (PubMed:21304601). Conditional RNAi-mediated knockdown in the female germline does not affect fertilization but embryos fail to initiate proper mitotic divisions and do not hatch (PubMed:25340780). Embryos contain only two nuclei; a small nucleus with a centriolar spindle and a large round nucleus (PubMed:25340780). Knockdown in stage 3 oocytes often results in the heterochromatic regions of all four chromosomes failing to separate during prometaphase I and metaphase I of meiosis I (PubMed:25340780). In some instances, the anchored heterochromatic regions become stretched as the centromeres attempt to move towards the spindles poles creating long, abnormal heterochromatin structures that project from the main chromosome mass with centromeres at their tips (PubMed:25340780). Spindle assembly is not affected (PubMed:25340780). Spindles are bipolar although one or both sides of the spindle are elongated due to the abnormal heterochromatin projections (PubMed:25340780).</text>
</comment>
<comment type="miscellaneous">
    <text>Eukaryotic topoisomerase I and II can relax both negative and positive supercoils, whereas prokaryotic enzymes relax only negative supercoils.</text>
</comment>
<comment type="similarity">
    <text evidence="24">Belongs to the type II topoisomerase family.</text>
</comment>
<comment type="sequence caution" evidence="24">
    <conflict type="frameshift">
        <sequence resource="EMBL-CDS" id="AAQ23558"/>
    </conflict>
</comment>
<name>TOP2_DROME</name>
<evidence type="ECO:0000250" key="1"/>
<evidence type="ECO:0000250" key="2">
    <source>
        <dbReference type="UniProtKB" id="P06786"/>
    </source>
</evidence>
<evidence type="ECO:0000250" key="3">
    <source>
        <dbReference type="UniProtKB" id="P11388"/>
    </source>
</evidence>
<evidence type="ECO:0000255" key="4">
    <source>
        <dbReference type="PROSITE-ProRule" id="PRU00995"/>
    </source>
</evidence>
<evidence type="ECO:0000255" key="5">
    <source>
        <dbReference type="PROSITE-ProRule" id="PRU01384"/>
    </source>
</evidence>
<evidence type="ECO:0000256" key="6">
    <source>
        <dbReference type="SAM" id="MobiDB-lite"/>
    </source>
</evidence>
<evidence type="ECO:0000269" key="7">
    <source>
    </source>
</evidence>
<evidence type="ECO:0000269" key="8">
    <source>
    </source>
</evidence>
<evidence type="ECO:0000269" key="9">
    <source>
    </source>
</evidence>
<evidence type="ECO:0000269" key="10">
    <source>
    </source>
</evidence>
<evidence type="ECO:0000269" key="11">
    <source>
    </source>
</evidence>
<evidence type="ECO:0000269" key="12">
    <source>
    </source>
</evidence>
<evidence type="ECO:0000269" key="13">
    <source>
    </source>
</evidence>
<evidence type="ECO:0000269" key="14">
    <source>
    </source>
</evidence>
<evidence type="ECO:0000269" key="15">
    <source>
    </source>
</evidence>
<evidence type="ECO:0000269" key="16">
    <source>
    </source>
</evidence>
<evidence type="ECO:0000269" key="17">
    <source>
    </source>
</evidence>
<evidence type="ECO:0000269" key="18">
    <source>
    </source>
</evidence>
<evidence type="ECO:0000269" key="19">
    <source>
    </source>
</evidence>
<evidence type="ECO:0000269" key="20">
    <source>
    </source>
</evidence>
<evidence type="ECO:0000269" key="21">
    <source>
    </source>
</evidence>
<evidence type="ECO:0000269" key="22">
    <source>
    </source>
</evidence>
<evidence type="ECO:0000303" key="23">
    <source>
    </source>
</evidence>
<evidence type="ECO:0000305" key="24"/>
<evidence type="ECO:0000312" key="25">
    <source>
        <dbReference type="EMBL" id="AAQ23558.1"/>
    </source>
</evidence>
<evidence type="ECO:0000312" key="26">
    <source>
        <dbReference type="FlyBase" id="FBgn0284220"/>
    </source>
</evidence>
<reference key="1">
    <citation type="journal article" date="1989" name="J. Mol. Biol.">
        <title>Structure of the Drosophila DNA topoisomerase II gene. Nucleotide sequence and homology among topoisomerases II.</title>
        <authorList>
            <person name="Wyckoff E."/>
            <person name="Natalie D."/>
            <person name="Nolan J.M."/>
            <person name="Lee M."/>
            <person name="Hsieh T.-S."/>
        </authorList>
    </citation>
    <scope>NUCLEOTIDE SEQUENCE [GENOMIC DNA]</scope>
</reference>
<reference key="2">
    <citation type="journal article" date="2000" name="Science">
        <title>The genome sequence of Drosophila melanogaster.</title>
        <authorList>
            <person name="Adams M.D."/>
            <person name="Celniker S.E."/>
            <person name="Holt R.A."/>
            <person name="Evans C.A."/>
            <person name="Gocayne J.D."/>
            <person name="Amanatides P.G."/>
            <person name="Scherer S.E."/>
            <person name="Li P.W."/>
            <person name="Hoskins R.A."/>
            <person name="Galle R.F."/>
            <person name="George R.A."/>
            <person name="Lewis S.E."/>
            <person name="Richards S."/>
            <person name="Ashburner M."/>
            <person name="Henderson S.N."/>
            <person name="Sutton G.G."/>
            <person name="Wortman J.R."/>
            <person name="Yandell M.D."/>
            <person name="Zhang Q."/>
            <person name="Chen L.X."/>
            <person name="Brandon R.C."/>
            <person name="Rogers Y.-H.C."/>
            <person name="Blazej R.G."/>
            <person name="Champe M."/>
            <person name="Pfeiffer B.D."/>
            <person name="Wan K.H."/>
            <person name="Doyle C."/>
            <person name="Baxter E.G."/>
            <person name="Helt G."/>
            <person name="Nelson C.R."/>
            <person name="Miklos G.L.G."/>
            <person name="Abril J.F."/>
            <person name="Agbayani A."/>
            <person name="An H.-J."/>
            <person name="Andrews-Pfannkoch C."/>
            <person name="Baldwin D."/>
            <person name="Ballew R.M."/>
            <person name="Basu A."/>
            <person name="Baxendale J."/>
            <person name="Bayraktaroglu L."/>
            <person name="Beasley E.M."/>
            <person name="Beeson K.Y."/>
            <person name="Benos P.V."/>
            <person name="Berman B.P."/>
            <person name="Bhandari D."/>
            <person name="Bolshakov S."/>
            <person name="Borkova D."/>
            <person name="Botchan M.R."/>
            <person name="Bouck J."/>
            <person name="Brokstein P."/>
            <person name="Brottier P."/>
            <person name="Burtis K.C."/>
            <person name="Busam D.A."/>
            <person name="Butler H."/>
            <person name="Cadieu E."/>
            <person name="Center A."/>
            <person name="Chandra I."/>
            <person name="Cherry J.M."/>
            <person name="Cawley S."/>
            <person name="Dahlke C."/>
            <person name="Davenport L.B."/>
            <person name="Davies P."/>
            <person name="de Pablos B."/>
            <person name="Delcher A."/>
            <person name="Deng Z."/>
            <person name="Mays A.D."/>
            <person name="Dew I."/>
            <person name="Dietz S.M."/>
            <person name="Dodson K."/>
            <person name="Doup L.E."/>
            <person name="Downes M."/>
            <person name="Dugan-Rocha S."/>
            <person name="Dunkov B.C."/>
            <person name="Dunn P."/>
            <person name="Durbin K.J."/>
            <person name="Evangelista C.C."/>
            <person name="Ferraz C."/>
            <person name="Ferriera S."/>
            <person name="Fleischmann W."/>
            <person name="Fosler C."/>
            <person name="Gabrielian A.E."/>
            <person name="Garg N.S."/>
            <person name="Gelbart W.M."/>
            <person name="Glasser K."/>
            <person name="Glodek A."/>
            <person name="Gong F."/>
            <person name="Gorrell J.H."/>
            <person name="Gu Z."/>
            <person name="Guan P."/>
            <person name="Harris M."/>
            <person name="Harris N.L."/>
            <person name="Harvey D.A."/>
            <person name="Heiman T.J."/>
            <person name="Hernandez J.R."/>
            <person name="Houck J."/>
            <person name="Hostin D."/>
            <person name="Houston K.A."/>
            <person name="Howland T.J."/>
            <person name="Wei M.-H."/>
            <person name="Ibegwam C."/>
            <person name="Jalali M."/>
            <person name="Kalush F."/>
            <person name="Karpen G.H."/>
            <person name="Ke Z."/>
            <person name="Kennison J.A."/>
            <person name="Ketchum K.A."/>
            <person name="Kimmel B.E."/>
            <person name="Kodira C.D."/>
            <person name="Kraft C.L."/>
            <person name="Kravitz S."/>
            <person name="Kulp D."/>
            <person name="Lai Z."/>
            <person name="Lasko P."/>
            <person name="Lei Y."/>
            <person name="Levitsky A.A."/>
            <person name="Li J.H."/>
            <person name="Li Z."/>
            <person name="Liang Y."/>
            <person name="Lin X."/>
            <person name="Liu X."/>
            <person name="Mattei B."/>
            <person name="McIntosh T.C."/>
            <person name="McLeod M.P."/>
            <person name="McPherson D."/>
            <person name="Merkulov G."/>
            <person name="Milshina N.V."/>
            <person name="Mobarry C."/>
            <person name="Morris J."/>
            <person name="Moshrefi A."/>
            <person name="Mount S.M."/>
            <person name="Moy M."/>
            <person name="Murphy B."/>
            <person name="Murphy L."/>
            <person name="Muzny D.M."/>
            <person name="Nelson D.L."/>
            <person name="Nelson D.R."/>
            <person name="Nelson K.A."/>
            <person name="Nixon K."/>
            <person name="Nusskern D.R."/>
            <person name="Pacleb J.M."/>
            <person name="Palazzolo M."/>
            <person name="Pittman G.S."/>
            <person name="Pan S."/>
            <person name="Pollard J."/>
            <person name="Puri V."/>
            <person name="Reese M.G."/>
            <person name="Reinert K."/>
            <person name="Remington K."/>
            <person name="Saunders R.D.C."/>
            <person name="Scheeler F."/>
            <person name="Shen H."/>
            <person name="Shue B.C."/>
            <person name="Siden-Kiamos I."/>
            <person name="Simpson M."/>
            <person name="Skupski M.P."/>
            <person name="Smith T.J."/>
            <person name="Spier E."/>
            <person name="Spradling A.C."/>
            <person name="Stapleton M."/>
            <person name="Strong R."/>
            <person name="Sun E."/>
            <person name="Svirskas R."/>
            <person name="Tector C."/>
            <person name="Turner R."/>
            <person name="Venter E."/>
            <person name="Wang A.H."/>
            <person name="Wang X."/>
            <person name="Wang Z.-Y."/>
            <person name="Wassarman D.A."/>
            <person name="Weinstock G.M."/>
            <person name="Weissenbach J."/>
            <person name="Williams S.M."/>
            <person name="Woodage T."/>
            <person name="Worley K.C."/>
            <person name="Wu D."/>
            <person name="Yang S."/>
            <person name="Yao Q.A."/>
            <person name="Ye J."/>
            <person name="Yeh R.-F."/>
            <person name="Zaveri J.S."/>
            <person name="Zhan M."/>
            <person name="Zhang G."/>
            <person name="Zhao Q."/>
            <person name="Zheng L."/>
            <person name="Zheng X.H."/>
            <person name="Zhong F.N."/>
            <person name="Zhong W."/>
            <person name="Zhou X."/>
            <person name="Zhu S.C."/>
            <person name="Zhu X."/>
            <person name="Smith H.O."/>
            <person name="Gibbs R.A."/>
            <person name="Myers E.W."/>
            <person name="Rubin G.M."/>
            <person name="Venter J.C."/>
        </authorList>
    </citation>
    <scope>NUCLEOTIDE SEQUENCE [LARGE SCALE GENOMIC DNA]</scope>
    <source>
        <strain>Berkeley</strain>
    </source>
</reference>
<reference key="3">
    <citation type="journal article" date="2002" name="Genome Biol.">
        <title>Annotation of the Drosophila melanogaster euchromatic genome: a systematic review.</title>
        <authorList>
            <person name="Misra S."/>
            <person name="Crosby M.A."/>
            <person name="Mungall C.J."/>
            <person name="Matthews B.B."/>
            <person name="Campbell K.S."/>
            <person name="Hradecky P."/>
            <person name="Huang Y."/>
            <person name="Kaminker J.S."/>
            <person name="Millburn G.H."/>
            <person name="Prochnik S.E."/>
            <person name="Smith C.D."/>
            <person name="Tupy J.L."/>
            <person name="Whitfield E.J."/>
            <person name="Bayraktaroglu L."/>
            <person name="Berman B.P."/>
            <person name="Bettencourt B.R."/>
            <person name="Celniker S.E."/>
            <person name="de Grey A.D.N.J."/>
            <person name="Drysdale R.A."/>
            <person name="Harris N.L."/>
            <person name="Richter J."/>
            <person name="Russo S."/>
            <person name="Schroeder A.J."/>
            <person name="Shu S.Q."/>
            <person name="Stapleton M."/>
            <person name="Yamada C."/>
            <person name="Ashburner M."/>
            <person name="Gelbart W.M."/>
            <person name="Rubin G.M."/>
            <person name="Lewis S.E."/>
        </authorList>
    </citation>
    <scope>GENOME REANNOTATION</scope>
    <source>
        <strain>Berkeley</strain>
    </source>
</reference>
<reference key="4">
    <citation type="submission" date="2003-08" db="EMBL/GenBank/DDBJ databases">
        <authorList>
            <person name="Stapleton M."/>
            <person name="Brokstein P."/>
            <person name="Hong L."/>
            <person name="Agbayani A."/>
            <person name="Carlson J."/>
            <person name="Champe M."/>
            <person name="Chavez C."/>
            <person name="Dorsett V."/>
            <person name="Dresnek D."/>
            <person name="Farfan D."/>
            <person name="Frise E."/>
            <person name="George R."/>
            <person name="Gonzalez M."/>
            <person name="Guarin H."/>
            <person name="Kronmiller B."/>
            <person name="Li P."/>
            <person name="Liao G."/>
            <person name="Miranda A."/>
            <person name="Mungall C.J."/>
            <person name="Nunoo J."/>
            <person name="Pacleb J."/>
            <person name="Paragas V."/>
            <person name="Park S."/>
            <person name="Patel S."/>
            <person name="Phouanenavong S."/>
            <person name="Wan K."/>
            <person name="Yu C."/>
            <person name="Lewis S.E."/>
            <person name="Rubin G.M."/>
            <person name="Celniker S."/>
        </authorList>
    </citation>
    <scope>NUCLEOTIDE SEQUENCE [LARGE SCALE MRNA]</scope>
    <source>
        <strain evidence="25">Berkeley</strain>
    </source>
</reference>
<reference key="5">
    <citation type="submission" date="2015-02" db="EMBL/GenBank/DDBJ databases">
        <authorList>
            <person name="Carlson J."/>
            <person name="Booth B."/>
            <person name="Frise E."/>
            <person name="Park S."/>
            <person name="Wan K."/>
            <person name="Yu C."/>
            <person name="Celniker S."/>
        </authorList>
    </citation>
    <scope>NUCLEOTIDE SEQUENCE [LARGE SCALE MRNA]</scope>
</reference>
<reference key="6">
    <citation type="journal article" date="1983" name="J. Biol. Chem.">
        <title>DNA topoisomerase II from Drosophila melanogaster. Relaxation of supercoiled DNA.</title>
        <authorList>
            <person name="Osheroff N."/>
            <person name="Shelton E.R."/>
            <person name="Brutlag D.L."/>
        </authorList>
    </citation>
    <scope>FUNCTION</scope>
    <scope>CATALYTIC ACTIVITY</scope>
    <scope>COFACTOR</scope>
    <scope>BIOPHYSICOCHEMICAL PROPERTIES</scope>
</reference>
<reference key="7">
    <citation type="journal article" date="1989" name="J. Biol. Chem.">
        <title>Single strand DNA cleavage reaction of duplex DNA by Drosophila topoisomerase II.</title>
        <authorList>
            <person name="Lee M.P."/>
            <person name="Sander M."/>
            <person name="Hsieh T.S."/>
        </authorList>
    </citation>
    <scope>FUNCTION</scope>
    <scope>CATALYTIC ACTIVITY</scope>
    <scope>COFACTOR</scope>
</reference>
<reference key="8">
    <citation type="journal article" date="1992" name="J. Biol. Chem.">
        <title>Effect of casein kinase II-mediated phosphorylation on the catalytic cycle of topoisomerase II. Regulation of enzyme activity by enhancement of ATP hydrolysis.</title>
        <authorList>
            <person name="Corbett A.H."/>
            <person name="DeVore R.F."/>
            <person name="Osheroff N."/>
        </authorList>
    </citation>
    <scope>FUNCTION</scope>
    <scope>CATALYTIC ACTIVITY</scope>
    <scope>COFACTOR</scope>
    <scope>PHOSPHORYLATION</scope>
</reference>
<reference key="9">
    <citation type="journal article" date="1993" name="Biochemistry">
        <title>Protein kinase C modulates the catalytic activity of topoisomerase II by enhancing the rate of ATP hydrolysis: evidence for a common mechanism of regulation by phosphorylation.</title>
        <authorList>
            <person name="Corbett A.H."/>
            <person name="Fernald A.W."/>
            <person name="Osheroff N."/>
        </authorList>
    </citation>
    <scope>FUNCTION</scope>
    <scope>COFACTOR</scope>
    <scope>PHOSPHORYLATION</scope>
</reference>
<reference key="10">
    <citation type="journal article" date="1996" name="Cell">
        <title>Chromatid segregation at anaphase requires the barren product, a novel chromosome-associated protein that interacts with Topoisomerase II.</title>
        <authorList>
            <person name="Bhat M.A."/>
            <person name="Philp A.V."/>
            <person name="Glover D.M."/>
            <person name="Bellen H.J."/>
        </authorList>
    </citation>
    <scope>FUNCTION</scope>
    <scope>CATALYTIC ACTIVITY</scope>
    <scope>INTERACTION WITH BARR</scope>
    <scope>SUBCELLULAR LOCATION</scope>
</reference>
<reference key="11">
    <citation type="journal article" date="1998" name="J. Biol. Chem.">
        <title>Identifying Lys359 as a critical residue for the ATP-dependent reactions of Drosophila DNA topoisomerase II.</title>
        <authorList>
            <person name="Hu T."/>
            <person name="Chang S."/>
            <person name="Hsieh T."/>
        </authorList>
    </citation>
    <scope>FUNCTION</scope>
    <scope>CATALYTIC ACTIVITY</scope>
    <scope>MUTAGENESIS OF LYS-359</scope>
</reference>
<reference key="12">
    <citation type="journal article" date="2000" name="Dev. Biol.">
        <title>Essential functions of DNA topoisomerase I in Drosophila melanogaster.</title>
        <authorList>
            <person name="Zhang C.X."/>
            <person name="Chen A.D."/>
            <person name="Gettel N.J."/>
            <person name="Hsieh T.S."/>
        </authorList>
    </citation>
    <scope>SUBCELLULAR LOCATION</scope>
    <scope>DEVELOPMENTAL STAGE</scope>
</reference>
<reference key="13">
    <citation type="journal article" date="2000" name="J. Cell Sci.">
        <title>During both interphase and mitosis, DNA topoisomerase II interacts with DNA as well as RNA through the protein's C-terminal domain.</title>
        <authorList>
            <person name="Rzepecki R."/>
            <person name="Fisher P.A."/>
        </authorList>
    </citation>
    <scope>FUNCTION</scope>
    <scope>CATALYTIC ACTIVITY</scope>
    <scope>SUBCELLULAR LOCATION</scope>
    <scope>PHOSPHORYLATION</scope>
</reference>
<reference key="14">
    <citation type="journal article" date="2000" name="Nature">
        <title>Single-molecule analysis of DNA uncoiling by a type II topoisomerase.</title>
        <authorList>
            <person name="Strick T.R."/>
            <person name="Croquette V."/>
            <person name="Bensimon D."/>
        </authorList>
    </citation>
    <scope>FUNCTION</scope>
    <scope>CATALYTIC ACTIVITY</scope>
    <scope>BIOPHYSICOCHEMICAL PROPERTIES</scope>
</reference>
<reference key="15">
    <citation type="journal article" date="2001" name="Mol. Cell">
        <title>Drosophila chromosome condensation proteins Topoisomerase II and Barren colocalize with Polycomb and maintain Fab-7 PRE silencing.</title>
        <authorList>
            <person name="Lupo R."/>
            <person name="Breiling A."/>
            <person name="Bianchi M.E."/>
            <person name="Orlando V."/>
        </authorList>
    </citation>
    <scope>INTERACTION WITH BARR AND PH-P</scope>
    <scope>SUBCELLULAR LOCATION</scope>
</reference>
<reference key="16">
    <citation type="journal article" date="2003" name="J. Cell Sci.">
        <title>RNAi analysis reveals an unexpected role for topoisomerase II in chromosome arm congression to a metaphase plate.</title>
        <authorList>
            <person name="Chang C.J."/>
            <person name="Goulding S."/>
            <person name="Earnshaw W.C."/>
            <person name="Carmena M."/>
        </authorList>
    </citation>
    <scope>FUNCTION</scope>
    <scope>SUBCELLULAR LOCATION</scope>
</reference>
<reference key="17">
    <citation type="journal article" date="2008" name="J. Proteome Res.">
        <title>Phosphoproteome analysis of Drosophila melanogaster embryos.</title>
        <authorList>
            <person name="Zhai B."/>
            <person name="Villen J."/>
            <person name="Beausoleil S.A."/>
            <person name="Mintseris J."/>
            <person name="Gygi S.P."/>
        </authorList>
    </citation>
    <scope>PHOSPHORYLATION [LARGE SCALE ANALYSIS] AT SER-1284; SER-1344; THR-1352; SER-1374; SER-1385; SER-1392 AND SER-1396</scope>
    <scope>IDENTIFICATION BY MASS SPECTROMETRY</scope>
    <source>
        <tissue>Embryo</tissue>
    </source>
</reference>
<reference key="18">
    <citation type="journal article" date="2008" name="PLoS Biol.">
        <title>Dual role of topoisomerase II in centromere resolution and aurora B activity.</title>
        <authorList>
            <person name="Coelho P.A."/>
            <person name="Queiroz-Machado J."/>
            <person name="Carmo A.M."/>
            <person name="Moutinho-Pereira S."/>
            <person name="Maiato H."/>
            <person name="Sunkel C.E."/>
        </authorList>
    </citation>
    <scope>FUNCTION</scope>
    <scope>SUBCELLULAR LOCATION</scope>
</reference>
<reference key="19">
    <citation type="journal article" date="2011" name="PLoS ONE">
        <title>DNA topoisomerase II modulates insulator function in Drosophila.</title>
        <authorList>
            <person name="Ramos E."/>
            <person name="Torre E.A."/>
            <person name="Bushey A.M."/>
            <person name="Gurudatta B.V."/>
            <person name="Corces V.G."/>
        </authorList>
    </citation>
    <scope>FUNCTION</scope>
    <scope>INTERACTION WITH MOD(MDG4)</scope>
    <scope>SUBCELLULAR LOCATION</scope>
    <scope>DISRUPTION PHENOTYPE</scope>
</reference>
<reference key="20">
    <citation type="journal article" date="2013" name="Transcription">
        <title>Topoisomerase II plays a role in dosage compensation in Drosophila.</title>
        <authorList>
            <person name="Cugusi S."/>
            <person name="Ramos E."/>
            <person name="Ling H."/>
            <person name="Yokoyama R."/>
            <person name="Luk K.M."/>
            <person name="Lucchesi J.C."/>
        </authorList>
    </citation>
    <scope>FUNCTION</scope>
    <scope>INTERACTION WITH MLE</scope>
    <scope>ASSOCIATION WITH THE MSL COMPLEX</scope>
</reference>
<reference key="21">
    <citation type="journal article" date="2014" name="PLoS Genet.">
        <title>Topoisomerase II is required for the proper separation of heterochromatic regions during Drosophila melanogaster female meiosis.</title>
        <authorList>
            <person name="Hughes S.E."/>
            <person name="Hawley R.S."/>
        </authorList>
    </citation>
    <scope>FUNCTION</scope>
    <scope>DISRUPTION PHENOTYPE</scope>
</reference>